<organism>
    <name type="scientific">Streptococcus agalactiae serotype III (strain NEM316)</name>
    <dbReference type="NCBI Taxonomy" id="211110"/>
    <lineage>
        <taxon>Bacteria</taxon>
        <taxon>Bacillati</taxon>
        <taxon>Bacillota</taxon>
        <taxon>Bacilli</taxon>
        <taxon>Lactobacillales</taxon>
        <taxon>Streptococcaceae</taxon>
        <taxon>Streptococcus</taxon>
    </lineage>
</organism>
<name>ATPG_STRA3</name>
<feature type="chain" id="PRO_0000073383" description="ATP synthase gamma chain">
    <location>
        <begin position="1"/>
        <end position="293"/>
    </location>
</feature>
<keyword id="KW-0066">ATP synthesis</keyword>
<keyword id="KW-1003">Cell membrane</keyword>
<keyword id="KW-0139">CF(1)</keyword>
<keyword id="KW-0375">Hydrogen ion transport</keyword>
<keyword id="KW-0406">Ion transport</keyword>
<keyword id="KW-0472">Membrane</keyword>
<keyword id="KW-0813">Transport</keyword>
<comment type="function">
    <text evidence="1">Produces ATP from ADP in the presence of a proton gradient across the membrane. The gamma chain is believed to be important in regulating ATPase activity and the flow of protons through the CF(0) complex.</text>
</comment>
<comment type="subunit">
    <text evidence="1">F-type ATPases have 2 components, CF(1) - the catalytic core - and CF(0) - the membrane proton channel. CF(1) has five subunits: alpha(3), beta(3), gamma(1), delta(1), epsilon(1). CF(0) has three main subunits: a, b and c.</text>
</comment>
<comment type="subcellular location">
    <subcellularLocation>
        <location evidence="1">Cell membrane</location>
        <topology evidence="1">Peripheral membrane protein</topology>
    </subcellularLocation>
</comment>
<comment type="similarity">
    <text evidence="1">Belongs to the ATPase gamma chain family.</text>
</comment>
<dbReference type="EMBL" id="AL766847">
    <property type="protein sequence ID" value="CAD46524.1"/>
    <property type="molecule type" value="Genomic_DNA"/>
</dbReference>
<dbReference type="RefSeq" id="WP_000919082.1">
    <property type="nucleotide sequence ID" value="NC_004368.1"/>
</dbReference>
<dbReference type="SMR" id="Q8E5U9"/>
<dbReference type="KEGG" id="san:atpG"/>
<dbReference type="eggNOG" id="COG0224">
    <property type="taxonomic scope" value="Bacteria"/>
</dbReference>
<dbReference type="HOGENOM" id="CLU_050669_0_1_9"/>
<dbReference type="Proteomes" id="UP000000823">
    <property type="component" value="Chromosome"/>
</dbReference>
<dbReference type="GO" id="GO:0005886">
    <property type="term" value="C:plasma membrane"/>
    <property type="evidence" value="ECO:0007669"/>
    <property type="project" value="UniProtKB-SubCell"/>
</dbReference>
<dbReference type="GO" id="GO:0045259">
    <property type="term" value="C:proton-transporting ATP synthase complex"/>
    <property type="evidence" value="ECO:0007669"/>
    <property type="project" value="UniProtKB-KW"/>
</dbReference>
<dbReference type="GO" id="GO:0005524">
    <property type="term" value="F:ATP binding"/>
    <property type="evidence" value="ECO:0007669"/>
    <property type="project" value="UniProtKB-UniRule"/>
</dbReference>
<dbReference type="GO" id="GO:0046933">
    <property type="term" value="F:proton-transporting ATP synthase activity, rotational mechanism"/>
    <property type="evidence" value="ECO:0007669"/>
    <property type="project" value="UniProtKB-UniRule"/>
</dbReference>
<dbReference type="GO" id="GO:0042777">
    <property type="term" value="P:proton motive force-driven plasma membrane ATP synthesis"/>
    <property type="evidence" value="ECO:0007669"/>
    <property type="project" value="UniProtKB-UniRule"/>
</dbReference>
<dbReference type="CDD" id="cd12151">
    <property type="entry name" value="F1-ATPase_gamma"/>
    <property type="match status" value="1"/>
</dbReference>
<dbReference type="FunFam" id="3.40.1380.10:FF:000002">
    <property type="entry name" value="ATP synthase gamma chain"/>
    <property type="match status" value="1"/>
</dbReference>
<dbReference type="Gene3D" id="3.40.1380.10">
    <property type="match status" value="1"/>
</dbReference>
<dbReference type="Gene3D" id="1.10.287.80">
    <property type="entry name" value="ATP synthase, gamma subunit, helix hairpin domain"/>
    <property type="match status" value="1"/>
</dbReference>
<dbReference type="HAMAP" id="MF_00815">
    <property type="entry name" value="ATP_synth_gamma_bact"/>
    <property type="match status" value="1"/>
</dbReference>
<dbReference type="InterPro" id="IPR035968">
    <property type="entry name" value="ATP_synth_F1_ATPase_gsu"/>
</dbReference>
<dbReference type="InterPro" id="IPR000131">
    <property type="entry name" value="ATP_synth_F1_gsu"/>
</dbReference>
<dbReference type="InterPro" id="IPR023632">
    <property type="entry name" value="ATP_synth_F1_gsu_CS"/>
</dbReference>
<dbReference type="NCBIfam" id="TIGR01146">
    <property type="entry name" value="ATPsyn_F1gamma"/>
    <property type="match status" value="1"/>
</dbReference>
<dbReference type="NCBIfam" id="NF004147">
    <property type="entry name" value="PRK05621.2-1"/>
    <property type="match status" value="1"/>
</dbReference>
<dbReference type="PANTHER" id="PTHR11693">
    <property type="entry name" value="ATP SYNTHASE GAMMA CHAIN"/>
    <property type="match status" value="1"/>
</dbReference>
<dbReference type="PANTHER" id="PTHR11693:SF22">
    <property type="entry name" value="ATP SYNTHASE SUBUNIT GAMMA, MITOCHONDRIAL"/>
    <property type="match status" value="1"/>
</dbReference>
<dbReference type="Pfam" id="PF00231">
    <property type="entry name" value="ATP-synt"/>
    <property type="match status" value="1"/>
</dbReference>
<dbReference type="PRINTS" id="PR00126">
    <property type="entry name" value="ATPASEGAMMA"/>
</dbReference>
<dbReference type="SUPFAM" id="SSF52943">
    <property type="entry name" value="ATP synthase (F1-ATPase), gamma subunit"/>
    <property type="match status" value="1"/>
</dbReference>
<dbReference type="PROSITE" id="PS00153">
    <property type="entry name" value="ATPASE_GAMMA"/>
    <property type="match status" value="1"/>
</dbReference>
<proteinExistence type="inferred from homology"/>
<reference key="1">
    <citation type="journal article" date="2002" name="Mol. Microbiol.">
        <title>Genome sequence of Streptococcus agalactiae, a pathogen causing invasive neonatal disease.</title>
        <authorList>
            <person name="Glaser P."/>
            <person name="Rusniok C."/>
            <person name="Buchrieser C."/>
            <person name="Chevalier F."/>
            <person name="Frangeul L."/>
            <person name="Msadek T."/>
            <person name="Zouine M."/>
            <person name="Couve E."/>
            <person name="Lalioui L."/>
            <person name="Poyart C."/>
            <person name="Trieu-Cuot P."/>
            <person name="Kunst F."/>
        </authorList>
    </citation>
    <scope>NUCLEOTIDE SEQUENCE [LARGE SCALE GENOMIC DNA]</scope>
    <source>
        <strain>NEM316</strain>
    </source>
</reference>
<sequence>MAGSLSEIKDKILSTEKTSKITSAMQMVSSAKLVKSEQAARDFQVYASKIRQITTNLLKSDLVSGSDNPMLASRPVKKTGYIVITSDKGLVGGYNSKILKAMMDTITDYHTENDDYAIISIGSVGSDFFKARGMNVSFELRGLEDQPSFDQVGKIIAQAVEMYKNELFDELYVCYNHHVNSLTSQVRMQQMLPIKELDADEASEDRVITGFELEPNREVILEQLLPQYTESLIYGAIIDAKTAEHAAGMTAMQTATDNAKNVINDLTIQYNRARQAAITQEITEIVAGANALE</sequence>
<gene>
    <name evidence="1" type="primary">atpG</name>
    <name type="ordered locus">gbs0880</name>
</gene>
<accession>Q8E5U9</accession>
<evidence type="ECO:0000255" key="1">
    <source>
        <dbReference type="HAMAP-Rule" id="MF_00815"/>
    </source>
</evidence>
<protein>
    <recommendedName>
        <fullName evidence="1">ATP synthase gamma chain</fullName>
    </recommendedName>
    <alternativeName>
        <fullName evidence="1">ATP synthase F1 sector gamma subunit</fullName>
    </alternativeName>
    <alternativeName>
        <fullName evidence="1">F-ATPase gamma subunit</fullName>
    </alternativeName>
</protein>